<sequence>MGVTMRHCIDTRPPSCLIFLLLKLCATVSQGLPGTGPLGFHFTHALYNATVYENSAARTYVNSQSRMGITLIDLSWDIKYRIVSGDEEGFFKAEEVIIADFCFLRIRTKGGNSAILNREIQDNYLLIIKGSVRGEDLEAWTKVNIQVLDMNDLRPLFSPTTYSVTIAESTPLRTSVAQVTATDADIGSNGEFYYYFKNKVDLFSVHPTSGVISLSGRLNYDEKNRYDLEILAVDRGMKLYGNNGVSSTAKLYVHIERINEHAPIIHVVTHTPFSLDKEPTYAVVTVDDLDEGANGEIESVSIVDGDPLEQFFLAKEGKWMNEYKVKERRQVDWESFSYGYNLTIQAKDKGSPQKFSELKTVHIANPRRDSTPIKFEKDVYDISISEFSPPGVMVAIVKVNPEPLDVEYKLLPGKDAEYFKINPRSGLIVTAQPLNTVKKEVYKLEVSDKEGDAKAQVTIGIEDANDHTPEFQETLYETFVNESVPVGTNVLTVSASDKDKGENGYITYSIASLNLLPFAINQFTGVISTTEELDFESSPETYRFIVRASDWGSPYRHESEVNVTIRVGNVNDNSPLFEKVACQGVISYDFPVGGHITAISAIDIDELELVKYKIISGNELGFFYLNPDSGVLQLKKSLMNSGIKNGNFALRITATDGENFADPMAINISVLHGKVSSKSFSCRETRVAQKLAEKLLIKAKANGKLNQEDGFLDFYSINRQGPHFDKSFPSDVAVKENMPVGTNILKIKAYDADSGFNGKVLFTISDGNTDSCFNIDMETGQLKVLMPMDREHTDLYVLNITIYDLGKPQKSSWRLLTVNVEDANDNSPVFLQDSYSVSILESSSIGTEIIQVEARDKDLGSNGEVTYSVLTDTHQFVINSSTGIVYIADQLDRESKANYSLKIEARDKAESGQQLFSVVTLKIFLDDVNDCSPAFIPSSYSVKVLEDLPVGTVIAWLETQDPDLGLGGQVRYSLVNDYNGRFEIDKASGAIRLSKELDYEKQQFYNLTVRAKDKGRPVSLSSISFVEVEVVDVNENLHTPYFPDFAVVGSVKENSRIGTSVLQVTAHDEDSGRDGEIQYSIRDGSGLGRFNIDDESGVITAADILDRETTASYWLTVYATDRGVVPLYSTIEVYIEVEDVNDNAPLTSEPIYYPVVMENSPKDVSVIQIQAEDPDSGSNEKLTYRITSGNPQNFFAINIKTGLITTTSRKLDREQQAEHFLEVTVTDGGSSPKQSTIWVVVQVLDENDNKPQFPEKVYQIKLPERDRKKRGEPIYRAFAFDRDEGPNAEISYSIVDGNDDGKFFIDPKTGMVSSRKQFTAGSYDILTIKAVDNGRPQKSSTARLHIEWIKKPPPSPIPLTFDEPFYNFTIMESDKVTEIVGVVSVQPANTPLWFDIIGGNFDSSFDAEKGVGTIVIAKPLDAEQRSVYNMSVEVTDGTNVAVTQVFITVLDNNDNGPEFSQPHYDVTISEDVPPDTEILQIEATDRDEKHKLSYTIHSSIDAISMRKFRIDPSTGVLYTAERLDHEAQDKHILNIMVRDQEFPYRRNLARVIVNVEDANDHSPYFTNPLYEASVFESAALGSVVLQVTALDKDKGENAELIYSIEAGNTGNTFKIEPVLGIITISKEPDMTAMGQFVLSVKVTDQGSPPMSATAIVRISISMSDNSHPKFTHKDYQAEVNENVDIGTSVILISAISQSTLIYEVKDGNINGVFTINPYSGVITTRRALDYEHTSSYQLIIQATNMAGMASNATVSVQVVDENDNPPVFLFSQYSGSLSEAAPINSLVRSLDNSPLVIRATDADSNQNALLVYQIVESTAKKFFTVDSSTGAIRTIANLDHEVIAHFHFHVHVRDSGNPQLTAESPVEVNIEVTDVNDNPPVFTQAVFETVLLLPTYVGVEVLKVSATDPDSEVPPELTYSLMEGSVDHFLMDPNTGVLTIKNNNLSKDHYMLIVRVSDGKFYSTAMVTIMVKEAMDSGLHFTQSFYSTSISENSTNITKVAIVNAVGNRLNEPLKYSILNPGNKFKIKSTSGVIQTTGVPFDREEQELYELVVEASRELDHLRVARVVVRVNIEDVNDNSPVFVGLPYYAAVQVDAEPGTLIYRVTAIDKDKGANGEVTYVLQDDYGHFEINPNSGNVILKEAFNSDLSNIDYGVTILAKDGGTPSLSTFVELPITIVNKAMPVFDKPFYTASINEDISINTPILSINATSPEGQGIIYLIIDGDPFQQFNIDFDTGVLKVISPLDYEVMSVYKLTVRASDALTGARAEVTVDLLVDDVNDNPPVFDQPTYNTTLSESSLIGTPVLQLVSTDADSGNNNLVHYQIVQDTYNSTDYFHIDSSSGLILTARMLDHELVQHCTLKVTATDNGFPSLSSEVLVQIYISDVNDNPPVFNQLIYESYVSELAPRGHFVTCVQASDADSSDFDRLEYSILSGNDRTSFLMDSKSGVLTLSSHRKQRMEPLYSLNVSVSDGLFTSTAQVHIRVLGANLYSPAFSQSTYVAEVRENAASGTKVIHVRATDGDPGTYGQVSYSIINDFAKDRFLIDSNGQIITTERLDRENPLEGDISIYLRALDGGGRTTFCTVRVIVVDENDNAPQFMTLEYRASVRADVGRGHLVTQVQALDPDDGANSRITYSLYSEASVSVADLLEIDPDNGWMVTKGNFNQLRNTVLSFFVKAVDGGIPVRHSLIPVYIHVLPPETFLPSFTQSQYSFTIAEDTSIGSTIDTLRILPNQSVRFSTVNGERPENNKENVFIIEQETGAIKLDKRLDHEVSPAFHFKVAATIPLDKVDIVFTVDVDVKVLDLNDNKPVFETSSYETIIMEGMPVGTKLAQVRAIDTDWGANGQVTYSLHSDSHLEKVMEAFNIDSNTGWISTLKDLDHETDPTFSFFVVASDLGEAFSLSSMALVSVKVTDINDNAPVFAHEVYRGNVKESDPPGEVVAVLSTLDKDTSNINRQVSYHITGGNPRGRFALGMVQSEWKVYVKRPLDREEQDIYFLNITASDGLFVTQAMVEVTVSDVNDNSPVCDQVAYSASLPEDIPSNKIILKVSAKDADIGSNGDIRYSLYGSGNSDFFLDPESGELKTLALLDRERVPVYNLIARATDGGGRFCSSTVLLLLEDVNDNPPVFSSNHYTACVYENTATKALLTRVQAVDPDVGINRKVVYSLEDSASGVFSIDSSSGVIVLEQPLDREQQSSYNISVRATDQSPGQSLSSLTSVTITVLDINDNPPVFERRDYLVTVPEDTSLGTQVLSVFATSKDIGTNAEITYLIRSGNEQGKFRINPKTGGISVLEALDYEMCKRFYLVVEAKDGGTPALSTAATVSIDLTDVNDNPPRFSQDVYSAVISEDALEGDSVILLIAEDVDSKPNGQIRFSIVGGDRDNEFAVDPILGLVKVKKKLDRERVSGYSLLIQAVDSGIPAMSSTTTVNIDISDVNDNSPVFTPANYTAVIQENKPVGTSILQLVVTDRDSFHNGPPFSFSILSGNEDEEFMLDSHGILRSAVVFRHMESPEYLLCIQAKDSGKPQQVSHTYIRVRVIEESTHKPTAIPLEIFIVTMEDDFPGGVIGKIHATDQDMYDVLTFALKSEQKSLFKVNSHDGKIIALGGLDSGKYVLNVSVSDGRFQVPIDVVVHVEQLVHEMLQNTVTIRFENVSPEDFVGLHMHGFRRILRNAVLTQKQDSLRIISIQPVVGTNQLDMLFAVEMHSSEFYKPAYLIQKLSNARRHLENVMHIAAILEKNCSGLDCQEQHCEQGLSLDSHALMTYSTARISFVCPRFYRNVRCTCNGGVCPGSNDPCVEKPCPEDMQCVGYEASRRPFLCQCPPGKLGECSGHTSLSFAGNSYIKYRLSENSREEDFKLALRLRTLQSNGIIMYTRANPCMILKIVEGKLWFQLDCGSGPGILGISSRAVNDGSWHSVFLELNRNFTSLSLDDSYVERRRAPLYFQTLSTDSAIFFGALVQADNIRSLTDTRVTQVLGGFQGCLDSVVLNHNELPLQNKRSSFAEVVGLTELKLGCVLYPDACQRSPCLHGGSCSGLPSGGYQCSCLSQFTGTNCESEITACFPNPCRNGGSCDPIGNTFICSCKAGLTGVTCEDDVDECEREECENGGSCVNLFGSFFCNCTPGYVGQYCGLRPVVVPNIQAGHSYVGKEELIGIAVVLFVIFTLIVLFIVFRKKVFRKNYSRNNITLVQDPATAALLHKSNGIPFRSLRAGDGRNVYQEVGPPQVPVRPMAYTPCFQSDSRSNLDKGLDALGGEPQELSTFHPESPRILTARRGVVVCSVAPNLPAVSPCRSDCDSIRKNGWDTGSENKGAEDTGEVTCFANSNKGSNSEVQSLNSFQSDSGDDNAYHWDTSDWMPGARLSDIEEMPNYESQDGGAVHQGSTRELESDYYLGGYDIDSEYPPPHEEEFLSQDQLPPPLPEDFPEQYEALPPSQPTSLTGTMSPDCRRRPRFHPSQYLPPHPLPGETDLGGPPSSCDFSTFAVSMNQGTEVMAPTDSVSLSLHNSRGTSSSDMSARCGFDDSEVAMSDYESAGELSLTNLHIPFVETQHQTQV</sequence>
<evidence type="ECO:0000250" key="1"/>
<evidence type="ECO:0000250" key="2">
    <source>
        <dbReference type="UniProtKB" id="Q8BNA6"/>
    </source>
</evidence>
<evidence type="ECO:0000255" key="3"/>
<evidence type="ECO:0000255" key="4">
    <source>
        <dbReference type="PROSITE-ProRule" id="PRU00043"/>
    </source>
</evidence>
<evidence type="ECO:0000255" key="5">
    <source>
        <dbReference type="PROSITE-ProRule" id="PRU00076"/>
    </source>
</evidence>
<evidence type="ECO:0000255" key="6">
    <source>
        <dbReference type="PROSITE-ProRule" id="PRU00122"/>
    </source>
</evidence>
<evidence type="ECO:0000256" key="7">
    <source>
        <dbReference type="SAM" id="MobiDB-lite"/>
    </source>
</evidence>
<evidence type="ECO:0000269" key="8">
    <source>
    </source>
</evidence>
<evidence type="ECO:0000305" key="9"/>
<reference key="1">
    <citation type="journal article" date="2002" name="Biochem. Biophys. Res. Commun.">
        <title>Mammalian fat3: a large protein that contains multiple cadherin and EGF-like motifs.</title>
        <authorList>
            <person name="Mitsui K."/>
            <person name="Nakajima D."/>
            <person name="Ohara O."/>
            <person name="Nakayama M."/>
        </authorList>
    </citation>
    <scope>NUCLEOTIDE SEQUENCE [MRNA]</scope>
    <scope>TISSUE SPECIFICITY</scope>
    <scope>DEVELOPMENTAL STAGE</scope>
    <source>
        <strain>Sprague-Dawley</strain>
        <tissue>Brain</tissue>
    </source>
</reference>
<accession>Q8R508</accession>
<proteinExistence type="evidence at protein level"/>
<gene>
    <name type="primary">Fat3</name>
</gene>
<protein>
    <recommendedName>
        <fullName>Protocadherin Fat 3</fullName>
    </recommendedName>
    <alternativeName>
        <fullName>FAT tumor suppressor homolog 3</fullName>
    </alternativeName>
</protein>
<dbReference type="EMBL" id="AB076401">
    <property type="protein sequence ID" value="BAB86869.1"/>
    <property type="molecule type" value="mRNA"/>
</dbReference>
<dbReference type="RefSeq" id="NP_612553.1">
    <property type="nucleotide sequence ID" value="NM_138544.1"/>
</dbReference>
<dbReference type="SMR" id="Q8R508"/>
<dbReference type="BioGRID" id="251318">
    <property type="interactions" value="1"/>
</dbReference>
<dbReference type="FunCoup" id="Q8R508">
    <property type="interactions" value="806"/>
</dbReference>
<dbReference type="STRING" id="10116.ENSRNOP00000015976"/>
<dbReference type="GlyCosmos" id="Q8R508">
    <property type="glycosylation" value="26 sites, No reported glycans"/>
</dbReference>
<dbReference type="GlyGen" id="Q8R508">
    <property type="glycosylation" value="26 sites"/>
</dbReference>
<dbReference type="iPTMnet" id="Q8R508"/>
<dbReference type="PhosphoSitePlus" id="Q8R508"/>
<dbReference type="PaxDb" id="10116-ENSRNOP00000015976"/>
<dbReference type="GeneID" id="191571"/>
<dbReference type="UCSC" id="RGD:620657">
    <property type="organism name" value="rat"/>
</dbReference>
<dbReference type="AGR" id="RGD:620657"/>
<dbReference type="CTD" id="120114"/>
<dbReference type="RGD" id="620657">
    <property type="gene designation" value="Fat3"/>
</dbReference>
<dbReference type="eggNOG" id="KOG1219">
    <property type="taxonomic scope" value="Eukaryota"/>
</dbReference>
<dbReference type="InParanoid" id="Q8R508"/>
<dbReference type="PhylomeDB" id="Q8R508"/>
<dbReference type="PRO" id="PR:Q8R508"/>
<dbReference type="Proteomes" id="UP000002494">
    <property type="component" value="Unplaced"/>
</dbReference>
<dbReference type="GO" id="GO:0030425">
    <property type="term" value="C:dendrite"/>
    <property type="evidence" value="ECO:0000266"/>
    <property type="project" value="RGD"/>
</dbReference>
<dbReference type="GO" id="GO:0005886">
    <property type="term" value="C:plasma membrane"/>
    <property type="evidence" value="ECO:0007669"/>
    <property type="project" value="InterPro"/>
</dbReference>
<dbReference type="GO" id="GO:0005509">
    <property type="term" value="F:calcium ion binding"/>
    <property type="evidence" value="ECO:0007669"/>
    <property type="project" value="InterPro"/>
</dbReference>
<dbReference type="GO" id="GO:0048667">
    <property type="term" value="P:cell morphogenesis involved in neuron differentiation"/>
    <property type="evidence" value="ECO:0000266"/>
    <property type="project" value="RGD"/>
</dbReference>
<dbReference type="GO" id="GO:0098609">
    <property type="term" value="P:cell-cell adhesion"/>
    <property type="evidence" value="ECO:0000318"/>
    <property type="project" value="GO_Central"/>
</dbReference>
<dbReference type="GO" id="GO:0016358">
    <property type="term" value="P:dendrite development"/>
    <property type="evidence" value="ECO:0000266"/>
    <property type="project" value="RGD"/>
</dbReference>
<dbReference type="GO" id="GO:0007156">
    <property type="term" value="P:homophilic cell adhesion via plasma membrane adhesion molecules"/>
    <property type="evidence" value="ECO:0007669"/>
    <property type="project" value="InterPro"/>
</dbReference>
<dbReference type="GO" id="GO:1904936">
    <property type="term" value="P:interneuron migration"/>
    <property type="evidence" value="ECO:0000266"/>
    <property type="project" value="RGD"/>
</dbReference>
<dbReference type="GO" id="GO:2000171">
    <property type="term" value="P:negative regulation of dendrite development"/>
    <property type="evidence" value="ECO:0000266"/>
    <property type="project" value="RGD"/>
</dbReference>
<dbReference type="GO" id="GO:0010842">
    <property type="term" value="P:retina layer formation"/>
    <property type="evidence" value="ECO:0000266"/>
    <property type="project" value="RGD"/>
</dbReference>
<dbReference type="CDD" id="cd11304">
    <property type="entry name" value="Cadherin_repeat"/>
    <property type="match status" value="33"/>
</dbReference>
<dbReference type="CDD" id="cd00054">
    <property type="entry name" value="EGF_CA"/>
    <property type="match status" value="3"/>
</dbReference>
<dbReference type="CDD" id="cd00110">
    <property type="entry name" value="LamG"/>
    <property type="match status" value="1"/>
</dbReference>
<dbReference type="FunFam" id="2.60.40.60:FF:000013">
    <property type="entry name" value="Cadherin EGF LAG seven-pass G-type receptor"/>
    <property type="match status" value="2"/>
</dbReference>
<dbReference type="FunFam" id="2.60.40.60:FF:000015">
    <property type="entry name" value="FAT atypical cadherin 1"/>
    <property type="match status" value="1"/>
</dbReference>
<dbReference type="FunFam" id="2.60.40.60:FF:000021">
    <property type="entry name" value="FAT atypical cadherin 1"/>
    <property type="match status" value="3"/>
</dbReference>
<dbReference type="FunFam" id="2.60.40.60:FF:000026">
    <property type="entry name" value="FAT atypical cadherin 1"/>
    <property type="match status" value="2"/>
</dbReference>
<dbReference type="FunFam" id="2.60.40.60:FF:000032">
    <property type="entry name" value="FAT atypical cadherin 1"/>
    <property type="match status" value="1"/>
</dbReference>
<dbReference type="FunFam" id="2.60.40.60:FF:000033">
    <property type="entry name" value="FAT atypical cadherin 1"/>
    <property type="match status" value="1"/>
</dbReference>
<dbReference type="FunFam" id="2.60.40.60:FF:000037">
    <property type="entry name" value="FAT atypical cadherin 1"/>
    <property type="match status" value="1"/>
</dbReference>
<dbReference type="FunFam" id="2.60.40.60:FF:000041">
    <property type="entry name" value="FAT atypical cadherin 1"/>
    <property type="match status" value="1"/>
</dbReference>
<dbReference type="FunFam" id="2.60.40.60:FF:000051">
    <property type="entry name" value="FAT atypical cadherin 1"/>
    <property type="match status" value="1"/>
</dbReference>
<dbReference type="FunFam" id="2.60.40.60:FF:000052">
    <property type="entry name" value="FAT atypical cadherin 1"/>
    <property type="match status" value="1"/>
</dbReference>
<dbReference type="FunFam" id="2.60.40.60:FF:000064">
    <property type="entry name" value="FAT atypical cadherin 1"/>
    <property type="match status" value="1"/>
</dbReference>
<dbReference type="FunFam" id="2.60.40.60:FF:000065">
    <property type="entry name" value="FAT atypical cadherin 1"/>
    <property type="match status" value="1"/>
</dbReference>
<dbReference type="FunFam" id="2.60.40.60:FF:000066">
    <property type="entry name" value="FAT atypical cadherin 1"/>
    <property type="match status" value="1"/>
</dbReference>
<dbReference type="FunFam" id="2.60.40.60:FF:000067">
    <property type="entry name" value="FAT atypical cadherin 1"/>
    <property type="match status" value="1"/>
</dbReference>
<dbReference type="FunFam" id="2.60.40.60:FF:000071">
    <property type="entry name" value="FAT atypical cadherin 1"/>
    <property type="match status" value="1"/>
</dbReference>
<dbReference type="FunFam" id="2.60.40.60:FF:000075">
    <property type="entry name" value="FAT atypical cadherin 1"/>
    <property type="match status" value="1"/>
</dbReference>
<dbReference type="FunFam" id="2.60.40.60:FF:000079">
    <property type="entry name" value="FAT atypical cadherin 1"/>
    <property type="match status" value="1"/>
</dbReference>
<dbReference type="FunFam" id="2.60.40.60:FF:000080">
    <property type="entry name" value="FAT atypical cadherin 1"/>
    <property type="match status" value="1"/>
</dbReference>
<dbReference type="FunFam" id="2.10.25.10:FF:000165">
    <property type="entry name" value="FAT atypical cadherin 3"/>
    <property type="match status" value="1"/>
</dbReference>
<dbReference type="FunFam" id="2.10.25.10:FF:000172">
    <property type="entry name" value="FAT atypical cadherin 3"/>
    <property type="match status" value="1"/>
</dbReference>
<dbReference type="FunFam" id="2.60.120.200:FF:000035">
    <property type="entry name" value="FAT atypical cadherin 3"/>
    <property type="match status" value="1"/>
</dbReference>
<dbReference type="FunFam" id="2.60.40.60:FF:000024">
    <property type="entry name" value="FAT atypical cadherin 3"/>
    <property type="match status" value="1"/>
</dbReference>
<dbReference type="FunFam" id="2.60.40.60:FF:000039">
    <property type="entry name" value="FAT atypical cadherin 3"/>
    <property type="match status" value="1"/>
</dbReference>
<dbReference type="FunFam" id="2.60.40.60:FF:000053">
    <property type="entry name" value="FAT atypical cadherin 3"/>
    <property type="match status" value="1"/>
</dbReference>
<dbReference type="FunFam" id="2.60.40.60:FF:000058">
    <property type="entry name" value="FAT atypical cadherin 3"/>
    <property type="match status" value="1"/>
</dbReference>
<dbReference type="FunFam" id="2.60.40.60:FF:000059">
    <property type="entry name" value="FAT atypical cadherin 3"/>
    <property type="match status" value="1"/>
</dbReference>
<dbReference type="FunFam" id="2.60.40.60:FF:000061">
    <property type="entry name" value="FAT atypical cadherin 3"/>
    <property type="match status" value="2"/>
</dbReference>
<dbReference type="FunFam" id="2.60.40.60:FF:000084">
    <property type="entry name" value="FAT atypical cadherin 3"/>
    <property type="match status" value="1"/>
</dbReference>
<dbReference type="FunFam" id="2.60.40.60:FF:000090">
    <property type="entry name" value="FAT atypical cadherin 3"/>
    <property type="match status" value="1"/>
</dbReference>
<dbReference type="FunFam" id="2.60.40.60:FF:000165">
    <property type="entry name" value="FAT atypical cadherin 3"/>
    <property type="match status" value="1"/>
</dbReference>
<dbReference type="FunFam" id="2.60.40.60:FF:000370">
    <property type="entry name" value="FAT atypical cadherin 3"/>
    <property type="match status" value="1"/>
</dbReference>
<dbReference type="FunFam" id="2.60.40.60:FF:000035">
    <property type="entry name" value="Protocadherin Fat 3"/>
    <property type="match status" value="1"/>
</dbReference>
<dbReference type="Gene3D" id="2.60.120.200">
    <property type="match status" value="1"/>
</dbReference>
<dbReference type="Gene3D" id="2.60.40.60">
    <property type="entry name" value="Cadherins"/>
    <property type="match status" value="34"/>
</dbReference>
<dbReference type="Gene3D" id="2.10.25.10">
    <property type="entry name" value="Laminin"/>
    <property type="match status" value="3"/>
</dbReference>
<dbReference type="InterPro" id="IPR002126">
    <property type="entry name" value="Cadherin-like_dom"/>
</dbReference>
<dbReference type="InterPro" id="IPR015919">
    <property type="entry name" value="Cadherin-like_sf"/>
</dbReference>
<dbReference type="InterPro" id="IPR020894">
    <property type="entry name" value="Cadherin_CS"/>
</dbReference>
<dbReference type="InterPro" id="IPR013320">
    <property type="entry name" value="ConA-like_dom_sf"/>
</dbReference>
<dbReference type="InterPro" id="IPR001881">
    <property type="entry name" value="EGF-like_Ca-bd_dom"/>
</dbReference>
<dbReference type="InterPro" id="IPR013032">
    <property type="entry name" value="EGF-like_CS"/>
</dbReference>
<dbReference type="InterPro" id="IPR000742">
    <property type="entry name" value="EGF-like_dom"/>
</dbReference>
<dbReference type="InterPro" id="IPR000152">
    <property type="entry name" value="EGF-type_Asp/Asn_hydroxyl_site"/>
</dbReference>
<dbReference type="InterPro" id="IPR018097">
    <property type="entry name" value="EGF_Ca-bd_CS"/>
</dbReference>
<dbReference type="InterPro" id="IPR001791">
    <property type="entry name" value="Laminin_G"/>
</dbReference>
<dbReference type="PANTHER" id="PTHR24026">
    <property type="entry name" value="FAT ATYPICAL CADHERIN-RELATED"/>
    <property type="match status" value="1"/>
</dbReference>
<dbReference type="PANTHER" id="PTHR24026:SF136">
    <property type="entry name" value="PROTOCADHERIN-23"/>
    <property type="match status" value="1"/>
</dbReference>
<dbReference type="Pfam" id="PF00028">
    <property type="entry name" value="Cadherin"/>
    <property type="match status" value="27"/>
</dbReference>
<dbReference type="Pfam" id="PF00008">
    <property type="entry name" value="EGF"/>
    <property type="match status" value="1"/>
</dbReference>
<dbReference type="Pfam" id="PF12661">
    <property type="entry name" value="hEGF"/>
    <property type="match status" value="1"/>
</dbReference>
<dbReference type="Pfam" id="PF02210">
    <property type="entry name" value="Laminin_G_2"/>
    <property type="match status" value="1"/>
</dbReference>
<dbReference type="PRINTS" id="PR00205">
    <property type="entry name" value="CADHERIN"/>
</dbReference>
<dbReference type="SMART" id="SM00112">
    <property type="entry name" value="CA"/>
    <property type="match status" value="32"/>
</dbReference>
<dbReference type="SMART" id="SM00181">
    <property type="entry name" value="EGF"/>
    <property type="match status" value="4"/>
</dbReference>
<dbReference type="SMART" id="SM00179">
    <property type="entry name" value="EGF_CA"/>
    <property type="match status" value="3"/>
</dbReference>
<dbReference type="SMART" id="SM00282">
    <property type="entry name" value="LamG"/>
    <property type="match status" value="1"/>
</dbReference>
<dbReference type="SUPFAM" id="SSF49313">
    <property type="entry name" value="Cadherin-like"/>
    <property type="match status" value="34"/>
</dbReference>
<dbReference type="SUPFAM" id="SSF49899">
    <property type="entry name" value="Concanavalin A-like lectins/glucanases"/>
    <property type="match status" value="1"/>
</dbReference>
<dbReference type="SUPFAM" id="SSF57196">
    <property type="entry name" value="EGF/Laminin"/>
    <property type="match status" value="3"/>
</dbReference>
<dbReference type="PROSITE" id="PS00010">
    <property type="entry name" value="ASX_HYDROXYL"/>
    <property type="match status" value="1"/>
</dbReference>
<dbReference type="PROSITE" id="PS00232">
    <property type="entry name" value="CADHERIN_1"/>
    <property type="match status" value="19"/>
</dbReference>
<dbReference type="PROSITE" id="PS50268">
    <property type="entry name" value="CADHERIN_2"/>
    <property type="match status" value="32"/>
</dbReference>
<dbReference type="PROSITE" id="PS00022">
    <property type="entry name" value="EGF_1"/>
    <property type="match status" value="3"/>
</dbReference>
<dbReference type="PROSITE" id="PS01186">
    <property type="entry name" value="EGF_2"/>
    <property type="match status" value="1"/>
</dbReference>
<dbReference type="PROSITE" id="PS50026">
    <property type="entry name" value="EGF_3"/>
    <property type="match status" value="4"/>
</dbReference>
<dbReference type="PROSITE" id="PS01187">
    <property type="entry name" value="EGF_CA"/>
    <property type="match status" value="1"/>
</dbReference>
<dbReference type="PROSITE" id="PS50025">
    <property type="entry name" value="LAM_G_DOMAIN"/>
    <property type="match status" value="1"/>
</dbReference>
<comment type="function">
    <text evidence="1">May play a role in the interactions between neurites derived from specific subsets of neurons during development.</text>
</comment>
<comment type="subcellular location">
    <subcellularLocation>
        <location evidence="9">Membrane</location>
        <topology evidence="9">Single-pass type I membrane protein</topology>
    </subcellularLocation>
</comment>
<comment type="tissue specificity">
    <text evidence="8">Restricted to the nervous system. Abundantly expressed in the fetal brain.</text>
</comment>
<comment type="developmental stage">
    <text evidence="8">Present in brain and peaks at 15 dpc during embryonic development. Also present in the spinal cord (at protein level).</text>
</comment>
<organism>
    <name type="scientific">Rattus norvegicus</name>
    <name type="common">Rat</name>
    <dbReference type="NCBI Taxonomy" id="10116"/>
    <lineage>
        <taxon>Eukaryota</taxon>
        <taxon>Metazoa</taxon>
        <taxon>Chordata</taxon>
        <taxon>Craniata</taxon>
        <taxon>Vertebrata</taxon>
        <taxon>Euteleostomi</taxon>
        <taxon>Mammalia</taxon>
        <taxon>Eutheria</taxon>
        <taxon>Euarchontoglires</taxon>
        <taxon>Glires</taxon>
        <taxon>Rodentia</taxon>
        <taxon>Myomorpha</taxon>
        <taxon>Muroidea</taxon>
        <taxon>Muridae</taxon>
        <taxon>Murinae</taxon>
        <taxon>Rattus</taxon>
    </lineage>
</organism>
<name>FAT3_RAT</name>
<feature type="signal peptide" evidence="3">
    <location>
        <begin position="1"/>
        <end position="31"/>
    </location>
</feature>
<feature type="chain" id="PRO_0000324636" description="Protocadherin Fat 3">
    <location>
        <begin position="32"/>
        <end position="4555"/>
    </location>
</feature>
<feature type="topological domain" description="Extracellular" evidence="3">
    <location>
        <begin position="32"/>
        <end position="4153"/>
    </location>
</feature>
<feature type="transmembrane region" description="Helical" evidence="3">
    <location>
        <begin position="4154"/>
        <end position="4174"/>
    </location>
</feature>
<feature type="topological domain" description="Cytoplasmic" evidence="3">
    <location>
        <begin position="4175"/>
        <end position="4555"/>
    </location>
</feature>
<feature type="domain" description="Cadherin 1" evidence="4">
    <location>
        <begin position="43"/>
        <end position="157"/>
    </location>
</feature>
<feature type="domain" description="Cadherin 2" evidence="4">
    <location>
        <begin position="158"/>
        <end position="265"/>
    </location>
</feature>
<feature type="domain" description="Cadherin 3" evidence="4">
    <location>
        <begin position="263"/>
        <end position="374"/>
    </location>
</feature>
<feature type="domain" description="Cadherin 4" evidence="4">
    <location>
        <begin position="376"/>
        <end position="471"/>
    </location>
</feature>
<feature type="domain" description="Cadherin 5" evidence="4">
    <location>
        <begin position="472"/>
        <end position="577"/>
    </location>
</feature>
<feature type="domain" description="Cadherin 6" evidence="4">
    <location>
        <begin position="578"/>
        <end position="680"/>
    </location>
</feature>
<feature type="domain" description="Cadherin 7" evidence="4">
    <location>
        <begin position="726"/>
        <end position="830"/>
    </location>
</feature>
<feature type="domain" description="Cadherin 8" evidence="4">
    <location>
        <begin position="831"/>
        <end position="935"/>
    </location>
</feature>
<feature type="domain" description="Cadherin 9" evidence="4">
    <location>
        <begin position="936"/>
        <end position="1042"/>
    </location>
</feature>
<feature type="domain" description="Cadherin 10" evidence="4">
    <location>
        <begin position="1043"/>
        <end position="1147"/>
    </location>
</feature>
<feature type="domain" description="Cadherin 11" evidence="4">
    <location>
        <begin position="1148"/>
        <end position="1253"/>
    </location>
</feature>
<feature type="domain" description="Cadherin 12" evidence="4">
    <location>
        <begin position="1254"/>
        <end position="1358"/>
    </location>
</feature>
<feature type="domain" description="Cadherin 13" evidence="4">
    <location>
        <begin position="1362"/>
        <end position="1459"/>
    </location>
</feature>
<feature type="domain" description="Cadherin 14" evidence="4">
    <location>
        <begin position="1460"/>
        <end position="1565"/>
    </location>
</feature>
<feature type="domain" description="Cadherin 15" evidence="4">
    <location>
        <begin position="1566"/>
        <end position="1768"/>
    </location>
</feature>
<feature type="domain" description="Cadherin 16" evidence="4">
    <location>
        <begin position="1769"/>
        <end position="1882"/>
    </location>
</feature>
<feature type="domain" description="Cadherin 17" evidence="4">
    <location>
        <begin position="1883"/>
        <end position="1985"/>
    </location>
</feature>
<feature type="domain" description="Cadherin 18" evidence="4">
    <location>
        <begin position="1982"/>
        <end position="2083"/>
    </location>
</feature>
<feature type="domain" description="Cadherin 19" evidence="4">
    <location>
        <begin position="2084"/>
        <end position="2185"/>
    </location>
</feature>
<feature type="domain" description="Cadherin 20" evidence="4">
    <location>
        <begin position="2186"/>
        <end position="2286"/>
    </location>
</feature>
<feature type="domain" description="Cadherin 21" evidence="4">
    <location>
        <begin position="2287"/>
        <end position="2393"/>
    </location>
</feature>
<feature type="domain" description="Cadherin 22" evidence="4">
    <location>
        <begin position="2394"/>
        <end position="2495"/>
    </location>
</feature>
<feature type="domain" description="Cadherin 23" evidence="4">
    <location>
        <begin position="2496"/>
        <end position="2599"/>
    </location>
</feature>
<feature type="domain" description="Cadherin 24" evidence="4">
    <location>
        <begin position="2600"/>
        <end position="2707"/>
    </location>
</feature>
<feature type="domain" description="Cadherin 25" evidence="4">
    <location>
        <begin position="2708"/>
        <end position="2813"/>
    </location>
</feature>
<feature type="domain" description="Cadherin 26" evidence="4">
    <location>
        <begin position="2814"/>
        <end position="2923"/>
    </location>
</feature>
<feature type="domain" description="Cadherin 27" evidence="4">
    <location>
        <begin position="2924"/>
        <end position="3028"/>
    </location>
</feature>
<feature type="domain" description="Cadherin 28" evidence="4">
    <location>
        <begin position="3029"/>
        <end position="3130"/>
    </location>
</feature>
<feature type="domain" description="Cadherin 29" evidence="4">
    <location>
        <begin position="3131"/>
        <end position="3235"/>
    </location>
</feature>
<feature type="domain" description="Cadherin 30" evidence="4">
    <location>
        <begin position="3236"/>
        <end position="3340"/>
    </location>
</feature>
<feature type="domain" description="Cadherin 31" evidence="4">
    <location>
        <begin position="3341"/>
        <end position="3445"/>
    </location>
</feature>
<feature type="domain" description="Cadherin 32" evidence="4">
    <location>
        <begin position="3446"/>
        <end position="3550"/>
    </location>
</feature>
<feature type="domain" description="Cadherin 33" evidence="4">
    <location>
        <begin position="3551"/>
        <end position="3652"/>
    </location>
</feature>
<feature type="domain" description="EGF-like 1" evidence="5">
    <location>
        <begin position="3794"/>
        <end position="3832"/>
    </location>
</feature>
<feature type="domain" description="Laminin G-like" evidence="6">
    <location>
        <begin position="3834"/>
        <end position="4017"/>
    </location>
</feature>
<feature type="domain" description="EGF-like 2" evidence="5">
    <location>
        <begin position="4020"/>
        <end position="4057"/>
    </location>
</feature>
<feature type="domain" description="EGF-like 3" evidence="5">
    <location>
        <begin position="4059"/>
        <end position="4095"/>
    </location>
</feature>
<feature type="domain" description="EGF-like 4; calcium-binding" evidence="5">
    <location>
        <begin position="4097"/>
        <end position="4133"/>
    </location>
</feature>
<feature type="region of interest" description="Disordered" evidence="7">
    <location>
        <begin position="4326"/>
        <end position="4347"/>
    </location>
</feature>
<feature type="region of interest" description="Disordered" evidence="7">
    <location>
        <begin position="4395"/>
        <end position="4424"/>
    </location>
</feature>
<feature type="region of interest" description="Disordered" evidence="7">
    <location>
        <begin position="4452"/>
        <end position="4472"/>
    </location>
</feature>
<feature type="compositionally biased region" description="Polar residues" evidence="7">
    <location>
        <begin position="4326"/>
        <end position="4343"/>
    </location>
</feature>
<feature type="modified residue" description="Omega-N-methylarginine" evidence="2">
    <location>
        <position position="4508"/>
    </location>
</feature>
<feature type="modified residue" description="Omega-N-methylarginine" evidence="2">
    <location>
        <position position="4518"/>
    </location>
</feature>
<feature type="glycosylation site" description="N-linked (GlcNAc...) asparagine" evidence="3">
    <location>
        <position position="48"/>
    </location>
</feature>
<feature type="glycosylation site" description="N-linked (GlcNAc...) asparagine" evidence="3">
    <location>
        <position position="341"/>
    </location>
</feature>
<feature type="glycosylation site" description="N-linked (GlcNAc...) asparagine" evidence="3">
    <location>
        <position position="481"/>
    </location>
</feature>
<feature type="glycosylation site" description="N-linked (GlcNAc...) asparagine" evidence="3">
    <location>
        <position position="562"/>
    </location>
</feature>
<feature type="glycosylation site" description="N-linked (GlcNAc...) asparagine" evidence="3">
    <location>
        <position position="667"/>
    </location>
</feature>
<feature type="glycosylation site" description="N-linked (GlcNAc...) asparagine" evidence="3">
    <location>
        <position position="799"/>
    </location>
</feature>
<feature type="glycosylation site" description="N-linked (GlcNAc...) asparagine" evidence="3">
    <location>
        <position position="879"/>
    </location>
</feature>
<feature type="glycosylation site" description="N-linked (GlcNAc...) asparagine" evidence="3">
    <location>
        <position position="898"/>
    </location>
</feature>
<feature type="glycosylation site" description="N-linked (GlcNAc...) asparagine" evidence="3">
    <location>
        <position position="1006"/>
    </location>
</feature>
<feature type="glycosylation site" description="N-linked (GlcNAc...) asparagine" evidence="3">
    <location>
        <position position="1367"/>
    </location>
</feature>
<feature type="glycosylation site" description="N-linked (GlcNAc...) asparagine" evidence="3">
    <location>
        <position position="1429"/>
    </location>
</feature>
<feature type="glycosylation site" description="N-linked (GlcNAc...) asparagine" evidence="3">
    <location>
        <position position="1751"/>
    </location>
</feature>
<feature type="glycosylation site" description="N-linked (GlcNAc...) asparagine" evidence="3">
    <location>
        <position position="1944"/>
    </location>
</feature>
<feature type="glycosylation site" description="N-linked (GlcNAc...) asparagine" evidence="3">
    <location>
        <position position="1993"/>
    </location>
</feature>
<feature type="glycosylation site" description="N-linked (GlcNAc...) asparagine" evidence="3">
    <location>
        <position position="1996"/>
    </location>
</feature>
<feature type="glycosylation site" description="N-linked (GlcNAc...) asparagine" evidence="3">
    <location>
        <position position="2208"/>
    </location>
</feature>
<feature type="glycosylation site" description="N-linked (GlcNAc...) asparagine" evidence="3">
    <location>
        <position position="2292"/>
    </location>
</feature>
<feature type="glycosylation site" description="N-linked (GlcNAc...) asparagine" evidence="3">
    <location>
        <position position="2331"/>
    </location>
</feature>
<feature type="glycosylation site" description="N-linked (GlcNAc...) asparagine" evidence="3">
    <location>
        <position position="2467"/>
    </location>
</feature>
<feature type="glycosylation site" description="N-linked (GlcNAc...) asparagine" evidence="3">
    <location>
        <position position="2734"/>
    </location>
</feature>
<feature type="glycosylation site" description="N-linked (GlcNAc...) asparagine" evidence="3">
    <location>
        <position position="3000"/>
    </location>
</feature>
<feature type="glycosylation site" description="N-linked (GlcNAc...) asparagine" evidence="3">
    <location>
        <position position="3201"/>
    </location>
</feature>
<feature type="glycosylation site" description="N-linked (GlcNAc...) asparagine" evidence="3">
    <location>
        <position position="3449"/>
    </location>
</feature>
<feature type="glycosylation site" description="N-linked (GlcNAc...) asparagine" evidence="3">
    <location>
        <position position="3618"/>
    </location>
</feature>
<feature type="glycosylation site" description="N-linked (GlcNAc...) asparagine" evidence="3">
    <location>
        <position position="3741"/>
    </location>
</feature>
<feature type="glycosylation site" description="N-linked (GlcNAc...) asparagine" evidence="3">
    <location>
        <position position="3926"/>
    </location>
</feature>
<feature type="disulfide bond" evidence="1">
    <location>
        <begin position="3798"/>
        <end position="3809"/>
    </location>
</feature>
<feature type="disulfide bond" evidence="1">
    <location>
        <begin position="3803"/>
        <end position="3821"/>
    </location>
</feature>
<feature type="disulfide bond" evidence="1">
    <location>
        <begin position="3823"/>
        <end position="3831"/>
    </location>
</feature>
<feature type="disulfide bond" evidence="1">
    <location>
        <begin position="3984"/>
        <end position="4017"/>
    </location>
</feature>
<feature type="disulfide bond" evidence="1">
    <location>
        <begin position="4024"/>
        <end position="4035"/>
    </location>
</feature>
<feature type="disulfide bond" evidence="1">
    <location>
        <begin position="4029"/>
        <end position="4045"/>
    </location>
</feature>
<feature type="disulfide bond" evidence="1">
    <location>
        <begin position="4047"/>
        <end position="4056"/>
    </location>
</feature>
<feature type="disulfide bond" evidence="1">
    <location>
        <begin position="4063"/>
        <end position="4074"/>
    </location>
</feature>
<feature type="disulfide bond" evidence="1">
    <location>
        <begin position="4068"/>
        <end position="4083"/>
    </location>
</feature>
<feature type="disulfide bond" evidence="1">
    <location>
        <begin position="4085"/>
        <end position="4094"/>
    </location>
</feature>
<feature type="disulfide bond" evidence="1">
    <location>
        <begin position="4101"/>
        <end position="4112"/>
    </location>
</feature>
<feature type="disulfide bond" evidence="1">
    <location>
        <begin position="4106"/>
        <end position="4121"/>
    </location>
</feature>
<feature type="disulfide bond" evidence="1">
    <location>
        <begin position="4123"/>
        <end position="4132"/>
    </location>
</feature>
<keyword id="KW-0106">Calcium</keyword>
<keyword id="KW-0130">Cell adhesion</keyword>
<keyword id="KW-0217">Developmental protein</keyword>
<keyword id="KW-1015">Disulfide bond</keyword>
<keyword id="KW-0245">EGF-like domain</keyword>
<keyword id="KW-0325">Glycoprotein</keyword>
<keyword id="KW-0472">Membrane</keyword>
<keyword id="KW-0488">Methylation</keyword>
<keyword id="KW-1185">Reference proteome</keyword>
<keyword id="KW-0677">Repeat</keyword>
<keyword id="KW-0732">Signal</keyword>
<keyword id="KW-0812">Transmembrane</keyword>
<keyword id="KW-1133">Transmembrane helix</keyword>